<feature type="chain" id="PRO_1000010450" description="Heat-inducible transcription repressor HrcA">
    <location>
        <begin position="1"/>
        <end position="325"/>
    </location>
</feature>
<evidence type="ECO:0000255" key="1">
    <source>
        <dbReference type="HAMAP-Rule" id="MF_00081"/>
    </source>
</evidence>
<sequence length="325" mass="37016">MITDRQLSILNAIVEDYVDFGQPVGSKTLIERHNLNVSPATIRNEMKQLEDLNYIEKTHSSSGRSPSQLGFRYYVNRLLEQTSHQKTNKLRRLNQLLVENQYDVSSALTYFADELSNISQYTTLVVHPNHKQDIINNVHLIRANPNLVIMVIVFSSGHVEHVHLASDIPFNNDKLNTISNFVTNKLTEFNQNLQDDIVSFVQSEQEEIFINKLLNTMNNHISNQSNSIYMGGKVKLIDALNESNVSSIQPILQYIESNRIAELLQDISSPNINVKIGNEIDDSLSDISIVTSQYHFDETLKGQIAVIGPTAMHYQNVIQLLNRIW</sequence>
<name>HRCA_STAA3</name>
<organism>
    <name type="scientific">Staphylococcus aureus (strain USA300)</name>
    <dbReference type="NCBI Taxonomy" id="367830"/>
    <lineage>
        <taxon>Bacteria</taxon>
        <taxon>Bacillati</taxon>
        <taxon>Bacillota</taxon>
        <taxon>Bacilli</taxon>
        <taxon>Bacillales</taxon>
        <taxon>Staphylococcaceae</taxon>
        <taxon>Staphylococcus</taxon>
    </lineage>
</organism>
<dbReference type="EMBL" id="CP000255">
    <property type="protein sequence ID" value="ABD21503.1"/>
    <property type="molecule type" value="Genomic_DNA"/>
</dbReference>
<dbReference type="RefSeq" id="WP_000627140.1">
    <property type="nucleotide sequence ID" value="NZ_CP027476.1"/>
</dbReference>
<dbReference type="SMR" id="Q2FGE1"/>
<dbReference type="KEGG" id="saa:SAUSA300_1542"/>
<dbReference type="HOGENOM" id="CLU_050019_1_0_9"/>
<dbReference type="OMA" id="GPKRMDY"/>
<dbReference type="Proteomes" id="UP000001939">
    <property type="component" value="Chromosome"/>
</dbReference>
<dbReference type="GO" id="GO:0003677">
    <property type="term" value="F:DNA binding"/>
    <property type="evidence" value="ECO:0007669"/>
    <property type="project" value="InterPro"/>
</dbReference>
<dbReference type="GO" id="GO:0045892">
    <property type="term" value="P:negative regulation of DNA-templated transcription"/>
    <property type="evidence" value="ECO:0007669"/>
    <property type="project" value="UniProtKB-UniRule"/>
</dbReference>
<dbReference type="FunFam" id="1.10.10.10:FF:000049">
    <property type="entry name" value="Heat-inducible transcription repressor HrcA"/>
    <property type="match status" value="1"/>
</dbReference>
<dbReference type="Gene3D" id="3.30.450.40">
    <property type="match status" value="1"/>
</dbReference>
<dbReference type="Gene3D" id="3.30.390.60">
    <property type="entry name" value="Heat-inducible transcription repressor hrca homolog, domain 3"/>
    <property type="match status" value="1"/>
</dbReference>
<dbReference type="Gene3D" id="1.10.10.10">
    <property type="entry name" value="Winged helix-like DNA-binding domain superfamily/Winged helix DNA-binding domain"/>
    <property type="match status" value="1"/>
</dbReference>
<dbReference type="HAMAP" id="MF_00081">
    <property type="entry name" value="HrcA"/>
    <property type="match status" value="1"/>
</dbReference>
<dbReference type="InterPro" id="IPR029016">
    <property type="entry name" value="GAF-like_dom_sf"/>
</dbReference>
<dbReference type="InterPro" id="IPR002571">
    <property type="entry name" value="HrcA"/>
</dbReference>
<dbReference type="InterPro" id="IPR021153">
    <property type="entry name" value="HrcA_C"/>
</dbReference>
<dbReference type="InterPro" id="IPR036388">
    <property type="entry name" value="WH-like_DNA-bd_sf"/>
</dbReference>
<dbReference type="InterPro" id="IPR036390">
    <property type="entry name" value="WH_DNA-bd_sf"/>
</dbReference>
<dbReference type="InterPro" id="IPR023120">
    <property type="entry name" value="WHTH_transcript_rep_HrcA_IDD"/>
</dbReference>
<dbReference type="NCBIfam" id="TIGR00331">
    <property type="entry name" value="hrcA"/>
    <property type="match status" value="1"/>
</dbReference>
<dbReference type="PANTHER" id="PTHR34824">
    <property type="entry name" value="HEAT-INDUCIBLE TRANSCRIPTION REPRESSOR HRCA"/>
    <property type="match status" value="1"/>
</dbReference>
<dbReference type="PANTHER" id="PTHR34824:SF1">
    <property type="entry name" value="HEAT-INDUCIBLE TRANSCRIPTION REPRESSOR HRCA"/>
    <property type="match status" value="1"/>
</dbReference>
<dbReference type="Pfam" id="PF01628">
    <property type="entry name" value="HrcA"/>
    <property type="match status" value="1"/>
</dbReference>
<dbReference type="PIRSF" id="PIRSF005485">
    <property type="entry name" value="HrcA"/>
    <property type="match status" value="1"/>
</dbReference>
<dbReference type="SUPFAM" id="SSF55781">
    <property type="entry name" value="GAF domain-like"/>
    <property type="match status" value="1"/>
</dbReference>
<dbReference type="SUPFAM" id="SSF46785">
    <property type="entry name" value="Winged helix' DNA-binding domain"/>
    <property type="match status" value="1"/>
</dbReference>
<reference key="1">
    <citation type="journal article" date="2006" name="Lancet">
        <title>Complete genome sequence of USA300, an epidemic clone of community-acquired meticillin-resistant Staphylococcus aureus.</title>
        <authorList>
            <person name="Diep B.A."/>
            <person name="Gill S.R."/>
            <person name="Chang R.F."/>
            <person name="Phan T.H."/>
            <person name="Chen J.H."/>
            <person name="Davidson M.G."/>
            <person name="Lin F."/>
            <person name="Lin J."/>
            <person name="Carleton H.A."/>
            <person name="Mongodin E.F."/>
            <person name="Sensabaugh G.F."/>
            <person name="Perdreau-Remington F."/>
        </authorList>
    </citation>
    <scope>NUCLEOTIDE SEQUENCE [LARGE SCALE GENOMIC DNA]</scope>
    <source>
        <strain>USA300</strain>
    </source>
</reference>
<keyword id="KW-0678">Repressor</keyword>
<keyword id="KW-0346">Stress response</keyword>
<keyword id="KW-0804">Transcription</keyword>
<keyword id="KW-0805">Transcription regulation</keyword>
<proteinExistence type="inferred from homology"/>
<comment type="function">
    <text evidence="1">Negative regulator of class I heat shock genes (grpE-dnaK-dnaJ and groELS operons). Prevents heat-shock induction of these operons.</text>
</comment>
<comment type="similarity">
    <text evidence="1">Belongs to the HrcA family.</text>
</comment>
<protein>
    <recommendedName>
        <fullName evidence="1">Heat-inducible transcription repressor HrcA</fullName>
    </recommendedName>
</protein>
<gene>
    <name evidence="1" type="primary">hrcA</name>
    <name type="ordered locus">SAUSA300_1542</name>
</gene>
<accession>Q2FGE1</accession>